<comment type="function">
    <text>The AROM polypeptide catalyzes 5 consecutive enzymatic reactions in prechorismate polyaromatic amino acid biosynthesis.</text>
</comment>
<comment type="catalytic activity">
    <reaction evidence="1">
        <text>7-phospho-2-dehydro-3-deoxy-D-arabino-heptonate = 3-dehydroquinate + phosphate</text>
        <dbReference type="Rhea" id="RHEA:21968"/>
        <dbReference type="ChEBI" id="CHEBI:32364"/>
        <dbReference type="ChEBI" id="CHEBI:43474"/>
        <dbReference type="ChEBI" id="CHEBI:58394"/>
        <dbReference type="EC" id="4.2.3.4"/>
    </reaction>
</comment>
<comment type="catalytic activity">
    <reaction evidence="1">
        <text>3-dehydroquinate = 3-dehydroshikimate + H2O</text>
        <dbReference type="Rhea" id="RHEA:21096"/>
        <dbReference type="ChEBI" id="CHEBI:15377"/>
        <dbReference type="ChEBI" id="CHEBI:16630"/>
        <dbReference type="ChEBI" id="CHEBI:32364"/>
        <dbReference type="EC" id="4.2.1.10"/>
    </reaction>
</comment>
<comment type="catalytic activity">
    <reaction evidence="1">
        <text>shikimate + NADP(+) = 3-dehydroshikimate + NADPH + H(+)</text>
        <dbReference type="Rhea" id="RHEA:17737"/>
        <dbReference type="ChEBI" id="CHEBI:15378"/>
        <dbReference type="ChEBI" id="CHEBI:16630"/>
        <dbReference type="ChEBI" id="CHEBI:36208"/>
        <dbReference type="ChEBI" id="CHEBI:57783"/>
        <dbReference type="ChEBI" id="CHEBI:58349"/>
        <dbReference type="EC" id="1.1.1.25"/>
    </reaction>
</comment>
<comment type="catalytic activity">
    <reaction evidence="1">
        <text>shikimate + ATP = 3-phosphoshikimate + ADP + H(+)</text>
        <dbReference type="Rhea" id="RHEA:13121"/>
        <dbReference type="ChEBI" id="CHEBI:15378"/>
        <dbReference type="ChEBI" id="CHEBI:30616"/>
        <dbReference type="ChEBI" id="CHEBI:36208"/>
        <dbReference type="ChEBI" id="CHEBI:145989"/>
        <dbReference type="ChEBI" id="CHEBI:456216"/>
        <dbReference type="EC" id="2.7.1.71"/>
    </reaction>
</comment>
<comment type="catalytic activity">
    <reaction evidence="1">
        <text>3-phosphoshikimate + phosphoenolpyruvate = 5-O-(1-carboxyvinyl)-3-phosphoshikimate + phosphate</text>
        <dbReference type="Rhea" id="RHEA:21256"/>
        <dbReference type="ChEBI" id="CHEBI:43474"/>
        <dbReference type="ChEBI" id="CHEBI:57701"/>
        <dbReference type="ChEBI" id="CHEBI:58702"/>
        <dbReference type="ChEBI" id="CHEBI:145989"/>
        <dbReference type="EC" id="2.5.1.19"/>
    </reaction>
</comment>
<comment type="cofactor">
    <cofactor>
        <name>Zn(2+)</name>
        <dbReference type="ChEBI" id="CHEBI:29105"/>
    </cofactor>
    <text>Binds 2 Zn(2+) ions per subunit.</text>
</comment>
<comment type="pathway">
    <text evidence="1">Metabolic intermediate biosynthesis; chorismate biosynthesis; chorismate from D-erythrose 4-phosphate and phosphoenolpyruvate: step 2/7.</text>
</comment>
<comment type="pathway">
    <text evidence="1">Metabolic intermediate biosynthesis; chorismate biosynthesis; chorismate from D-erythrose 4-phosphate and phosphoenolpyruvate: step 3/7.</text>
</comment>
<comment type="pathway">
    <text evidence="1">Metabolic intermediate biosynthesis; chorismate biosynthesis; chorismate from D-erythrose 4-phosphate and phosphoenolpyruvate: step 4/7.</text>
</comment>
<comment type="pathway">
    <text evidence="1">Metabolic intermediate biosynthesis; chorismate biosynthesis; chorismate from D-erythrose 4-phosphate and phosphoenolpyruvate: step 5/7.</text>
</comment>
<comment type="pathway">
    <text evidence="1">Metabolic intermediate biosynthesis; chorismate biosynthesis; chorismate from D-erythrose 4-phosphate and phosphoenolpyruvate: step 6/7.</text>
</comment>
<comment type="subunit">
    <text evidence="1 2 3">Homodimer.</text>
</comment>
<comment type="subcellular location">
    <subcellularLocation>
        <location>Cytoplasm</location>
    </subcellularLocation>
</comment>
<comment type="similarity">
    <text evidence="1">In the N-terminal section; belongs to the sugar phosphate cyclases superfamily. Dehydroquinate synthase family.</text>
</comment>
<comment type="similarity">
    <text evidence="1">In the 2nd section; belongs to the EPSP synthase family.</text>
</comment>
<comment type="similarity">
    <text evidence="1">In the 3rd section; belongs to the shikimate kinase family.</text>
</comment>
<comment type="similarity">
    <text evidence="1">In the 4th section; belongs to the type-I 3-dehydroquinase family.</text>
</comment>
<comment type="similarity">
    <text evidence="1">In the C-terminal section; belongs to the shikimate dehydrogenase family.</text>
</comment>
<comment type="sequence caution" evidence="4">
    <conflict type="erroneous gene model prediction">
        <sequence resource="EMBL-CDS" id="CAA28836"/>
    </conflict>
</comment>
<comment type="sequence caution" evidence="4">
    <conflict type="frameshift">
        <sequence resource="EMBL-CDS" id="CAA28836"/>
    </conflict>
</comment>
<comment type="sequence caution" evidence="4">
    <conflict type="erroneous gene model prediction">
        <sequence resource="EMBL-CDS" id="EAA65484"/>
    </conflict>
</comment>
<gene>
    <name type="primary">aromA</name>
    <name type="synonym">aroA</name>
    <name type="synonym">aroM</name>
    <name type="ORF">AN0708</name>
</gene>
<name>ARO1_EMENI</name>
<sequence length="1583" mass="172664">MSNPTKISILGRESIIADFGLWRNYVAKDLISDCSSTTYVLVTDTNIGSIYTPSFEEAFRKAAAEITPSPRLLIYNAPPGEVSKSRQTKADIEDWMLSQNPPCGRDTVVIALGGGVIGDLTGFVASTYMRGVRYVQVPTTLLAMVDSSIGGKTAIDTPLGKNLIGAIWQPTKIYIDLEFLETLPVREFINGMAEVIKTAAISSEEEFTALEENAETILKAVRREVRPGEHRFEGIEEILKARILASARHKAYVVSADEREGGLRNLLNWGHSIGHAIEAILTPQILHGECVAIGMVKEAELARHLGILKGVAVSRIVKCLAAYGLPTSLKDARIRKLTAGKHCSVDQLMFNMALDKKNDGPKKKIVLLSAIGTPYETRASVVANEDIRVVLAPSIEVHPGVAQSSNVICAPPGSKSISNRALVLAALGSGTCRIKNLLHSDDTEVMLNALERLGAATFSWEEEGEVLVVNGKGGNLQASSSPLYLGNAGTASRFLTTVATLANSSTVDSSVLTGNNRMKQRPIGDLVDALTANGASIEYVERTGSLPLKIAASGGFAGGNINLAAKVSSQYVSSLLMCAPYAKEPVTLRLVGGKPISQPYIDMTTAMMRSFGIDVQKSTTEEHTYHIPQGRYVNPAEYVIESDASSATYPLAVAAVTGTTCTVPNIGSASLQGDARFAVEVLRPMGCTVEQTETSTTVTGPSDGILRPLPNVDMEPMTDAFLGASVLAAIARGKESNHTTRIYGIANQRVKECNRIKAMKDELAKFGVICREHDDGLEIDGIDRSNLRQPVGGVFCYDDHRVAFSFSVLSLVTPQPTLILEKECVGKTWPGWWDTLRQLFKVKLEGKELEEEPVAASGPDRANASIYIIGMRGAGKSTAGNWVSKALNRPFVDLDTELETVEGMTIPDIIKTRGWQGFRNAELEILKRTLKERSRGYVFACGGGVVEMPEARKLLTDYHKTKGNVLLLMRDIKKIMDFLSIDKTRPAYVEDMMGVWLRRKPWFQECSNIQYYSRDASPSGLARASEDFNRFLQVATGQIDSLSIIKEKEHSFFASLTLPDLREAGDILEEVCVGSDAVELRVDLLKDPASNNDIPSVDYVVEQLSFLRSRVTLPIIFTIRTQSQGGRFPDNAHDAALELYRLAFRSGCEFVDLEIAFPEDMLRAVTEMKGFSKIIASHHDPKGELSWANMSWIKFYNKALEYGDIIKLVGVARNIDDNTALRKFKNWAAEAHDVPLIAINMGDQGQLSRILNGFMTPVSHPSLPFKAAPGQLSATEIRKGLSLMGEIKPKKFAIFGSPISQSRSPALHNTLFAQVGLPHNYTRLETTNAQDVQEFIRSPDFGGASVTIPLKLDIMPLLDEVAAEAEIIGAVNTIIPVSTGKNTPSRLVGRNTDWQGMILSLRKAGVYGPKRKDQEQSALVVGGGGTARAAIYALHNMGYSPIYIVGRTPSKLENMVSTFPSSYNIRIVESPSSFESVPHVAIGTIPADQPIDPTMRETLCHMFERAQEADAEAVKAIEHAPRILLEMAYKPQVTALMRLASDSGWKTIPGLEVLVGQGWYQFKYWTGISPLYESARACSSPLI</sequence>
<evidence type="ECO:0000255" key="1">
    <source>
        <dbReference type="HAMAP-Rule" id="MF_03143"/>
    </source>
</evidence>
<evidence type="ECO:0000269" key="2">
    <source>
    </source>
</evidence>
<evidence type="ECO:0000269" key="3">
    <source>
    </source>
</evidence>
<evidence type="ECO:0000305" key="4"/>
<evidence type="ECO:0007829" key="5">
    <source>
        <dbReference type="PDB" id="1NVA"/>
    </source>
</evidence>
<evidence type="ECO:0007829" key="6">
    <source>
        <dbReference type="PDB" id="1NVF"/>
    </source>
</evidence>
<evidence type="ECO:0007829" key="7">
    <source>
        <dbReference type="PDB" id="1SG6"/>
    </source>
</evidence>
<accession>P07547</accession>
<accession>C8VRD2</accession>
<accession>Q5BFH2</accession>
<protein>
    <recommendedName>
        <fullName evidence="1">Pentafunctional AROM polypeptide</fullName>
    </recommendedName>
    <domain>
        <recommendedName>
            <fullName evidence="1">3-dehydroquinate synthase</fullName>
            <shortName evidence="1">DHQS</shortName>
            <ecNumber evidence="1">4.2.3.4</ecNumber>
        </recommendedName>
    </domain>
    <domain>
        <recommendedName>
            <fullName evidence="1">3-phosphoshikimate 1-carboxyvinyltransferase</fullName>
            <ecNumber evidence="1">2.5.1.19</ecNumber>
        </recommendedName>
        <alternativeName>
            <fullName evidence="1">5-enolpyruvylshikimate-3-phosphate synthase</fullName>
            <shortName evidence="1">EPSP synthase</shortName>
            <shortName evidence="1">EPSPS</shortName>
        </alternativeName>
    </domain>
    <domain>
        <recommendedName>
            <fullName evidence="1">Shikimate kinase</fullName>
            <shortName evidence="1">SK</shortName>
            <ecNumber evidence="1">2.7.1.71</ecNumber>
        </recommendedName>
    </domain>
    <domain>
        <recommendedName>
            <fullName evidence="1">3-dehydroquinate dehydratase</fullName>
            <shortName evidence="1">3-dehydroquinase</shortName>
            <ecNumber evidence="1">4.2.1.10</ecNumber>
        </recommendedName>
    </domain>
    <domain>
        <recommendedName>
            <fullName evidence="1">Shikimate dehydrogenase</fullName>
            <ecNumber evidence="1">1.1.1.25</ecNumber>
        </recommendedName>
    </domain>
</protein>
<proteinExistence type="evidence at protein level"/>
<keyword id="KW-0002">3D-structure</keyword>
<keyword id="KW-0028">Amino-acid biosynthesis</keyword>
<keyword id="KW-0057">Aromatic amino acid biosynthesis</keyword>
<keyword id="KW-0067">ATP-binding</keyword>
<keyword id="KW-0963">Cytoplasm</keyword>
<keyword id="KW-0418">Kinase</keyword>
<keyword id="KW-0456">Lyase</keyword>
<keyword id="KW-0479">Metal-binding</keyword>
<keyword id="KW-0511">Multifunctional enzyme</keyword>
<keyword id="KW-0521">NADP</keyword>
<keyword id="KW-0547">Nucleotide-binding</keyword>
<keyword id="KW-0560">Oxidoreductase</keyword>
<keyword id="KW-1185">Reference proteome</keyword>
<keyword id="KW-0808">Transferase</keyword>
<keyword id="KW-0862">Zinc</keyword>
<feature type="chain" id="PRO_0000140859" description="Pentafunctional AROM polypeptide">
    <location>
        <begin position="1"/>
        <end position="1583"/>
    </location>
</feature>
<feature type="region of interest" description="3-dehydroquinate synthase">
    <location>
        <begin position="1"/>
        <end position="384"/>
    </location>
</feature>
<feature type="region of interest" description="EPSP synthase">
    <location>
        <begin position="397"/>
        <end position="842"/>
    </location>
</feature>
<feature type="region of interest" description="Shikimate kinase">
    <location>
        <begin position="863"/>
        <end position="1055"/>
    </location>
</feature>
<feature type="region of interest" description="3-dehydroquinase">
    <location>
        <begin position="1056"/>
        <end position="1276"/>
    </location>
</feature>
<feature type="region of interest" description="Shikimate dehydrogenase">
    <location>
        <begin position="1289"/>
        <end position="1583"/>
    </location>
</feature>
<feature type="active site" description="Proton acceptor; for 3-dehydroquinate synthase activity">
    <location>
        <position position="260"/>
    </location>
</feature>
<feature type="active site" description="Proton acceptor; for 3-dehydroquinate synthase activity">
    <location>
        <position position="275"/>
    </location>
</feature>
<feature type="active site" description="For EPSP synthase activity" evidence="1">
    <location>
        <position position="824"/>
    </location>
</feature>
<feature type="active site" description="Proton acceptor; for 3-dehydroquinate dehydratase activity" evidence="1">
    <location>
        <position position="1179"/>
    </location>
</feature>
<feature type="active site" description="Schiff-base intermediate with substrate; for 3-dehydroquinate dehydratase activity" evidence="1">
    <location>
        <position position="1207"/>
    </location>
</feature>
<feature type="binding site" evidence="1 2 3">
    <location>
        <begin position="44"/>
        <end position="46"/>
    </location>
    <ligand>
        <name>NAD(+)</name>
        <dbReference type="ChEBI" id="CHEBI:57540"/>
    </ligand>
</feature>
<feature type="binding site" evidence="1 2 3">
    <location>
        <begin position="81"/>
        <end position="84"/>
    </location>
    <ligand>
        <name>NAD(+)</name>
        <dbReference type="ChEBI" id="CHEBI:57540"/>
    </ligand>
</feature>
<feature type="binding site" evidence="1 2 3">
    <location>
        <begin position="114"/>
        <end position="116"/>
    </location>
    <ligand>
        <name>NAD(+)</name>
        <dbReference type="ChEBI" id="CHEBI:57540"/>
    </ligand>
</feature>
<feature type="binding site" evidence="1 2 3">
    <location>
        <position position="119"/>
    </location>
    <ligand>
        <name>NAD(+)</name>
        <dbReference type="ChEBI" id="CHEBI:57540"/>
    </ligand>
</feature>
<feature type="binding site">
    <location>
        <position position="130"/>
    </location>
    <ligand>
        <name>7-phospho-2-dehydro-3-deoxy-D-arabino-heptonate</name>
        <dbReference type="ChEBI" id="CHEBI:58394"/>
    </ligand>
</feature>
<feature type="binding site" evidence="1 2 3">
    <location>
        <begin position="139"/>
        <end position="140"/>
    </location>
    <ligand>
        <name>NAD(+)</name>
        <dbReference type="ChEBI" id="CHEBI:57540"/>
    </ligand>
</feature>
<feature type="binding site">
    <location>
        <position position="146"/>
    </location>
    <ligand>
        <name>7-phospho-2-dehydro-3-deoxy-D-arabino-heptonate</name>
        <dbReference type="ChEBI" id="CHEBI:58394"/>
    </ligand>
</feature>
<feature type="binding site">
    <location>
        <position position="152"/>
    </location>
    <ligand>
        <name>7-phospho-2-dehydro-3-deoxy-D-arabino-heptonate</name>
        <dbReference type="ChEBI" id="CHEBI:58394"/>
    </ligand>
</feature>
<feature type="binding site" evidence="1 2 3">
    <location>
        <position position="161"/>
    </location>
    <ligand>
        <name>NAD(+)</name>
        <dbReference type="ChEBI" id="CHEBI:57540"/>
    </ligand>
</feature>
<feature type="binding site">
    <location>
        <position position="162"/>
    </location>
    <ligand>
        <name>7-phospho-2-dehydro-3-deoxy-D-arabino-heptonate</name>
        <dbReference type="ChEBI" id="CHEBI:58394"/>
    </ligand>
</feature>
<feature type="binding site" evidence="1 2 3">
    <location>
        <begin position="179"/>
        <end position="182"/>
    </location>
    <ligand>
        <name>NAD(+)</name>
        <dbReference type="ChEBI" id="CHEBI:57540"/>
    </ligand>
</feature>
<feature type="binding site" evidence="1 2 3">
    <location>
        <position position="190"/>
    </location>
    <ligand>
        <name>NAD(+)</name>
        <dbReference type="ChEBI" id="CHEBI:57540"/>
    </ligand>
</feature>
<feature type="binding site">
    <location>
        <begin position="194"/>
        <end position="197"/>
    </location>
    <ligand>
        <name>7-phospho-2-dehydro-3-deoxy-D-arabino-heptonate</name>
        <dbReference type="ChEBI" id="CHEBI:58394"/>
    </ligand>
</feature>
<feature type="binding site" evidence="1 2 3">
    <location>
        <position position="194"/>
    </location>
    <ligand>
        <name>Zn(2+)</name>
        <dbReference type="ChEBI" id="CHEBI:29105"/>
        <note>catalytic</note>
    </ligand>
</feature>
<feature type="binding site">
    <location>
        <position position="250"/>
    </location>
    <ligand>
        <name>7-phospho-2-dehydro-3-deoxy-D-arabino-heptonate</name>
        <dbReference type="ChEBI" id="CHEBI:58394"/>
    </ligand>
</feature>
<feature type="binding site">
    <location>
        <begin position="264"/>
        <end position="268"/>
    </location>
    <ligand>
        <name>7-phospho-2-dehydro-3-deoxy-D-arabino-heptonate</name>
        <dbReference type="ChEBI" id="CHEBI:58394"/>
    </ligand>
</feature>
<feature type="binding site">
    <location>
        <position position="271"/>
    </location>
    <ligand>
        <name>7-phospho-2-dehydro-3-deoxy-D-arabino-heptonate</name>
        <dbReference type="ChEBI" id="CHEBI:58394"/>
    </ligand>
</feature>
<feature type="binding site" evidence="1 2 3">
    <location>
        <position position="271"/>
    </location>
    <ligand>
        <name>Zn(2+)</name>
        <dbReference type="ChEBI" id="CHEBI:29105"/>
        <note>catalytic</note>
    </ligand>
</feature>
<feature type="binding site">
    <location>
        <position position="287"/>
    </location>
    <ligand>
        <name>7-phospho-2-dehydro-3-deoxy-D-arabino-heptonate</name>
        <dbReference type="ChEBI" id="CHEBI:58394"/>
    </ligand>
</feature>
<feature type="binding site" evidence="1 2 3">
    <location>
        <position position="287"/>
    </location>
    <ligand>
        <name>Zn(2+)</name>
        <dbReference type="ChEBI" id="CHEBI:29105"/>
        <note>catalytic</note>
    </ligand>
</feature>
<feature type="binding site">
    <location>
        <position position="356"/>
    </location>
    <ligand>
        <name>7-phospho-2-dehydro-3-deoxy-D-arabino-heptonate</name>
        <dbReference type="ChEBI" id="CHEBI:58394"/>
    </ligand>
</feature>
<feature type="binding site" evidence="1">
    <location>
        <begin position="870"/>
        <end position="877"/>
    </location>
    <ligand>
        <name>ATP</name>
        <dbReference type="ChEBI" id="CHEBI:30616"/>
    </ligand>
</feature>
<feature type="sequence conflict" description="In Ref. 1; CAA28836." evidence="4" ref="1">
    <original>A</original>
    <variation>R</variation>
    <location>
        <position position="62"/>
    </location>
</feature>
<feature type="sequence conflict" description="In Ref. 1; CAA28836." evidence="4" ref="1">
    <original>A</original>
    <variation>R</variation>
    <location>
        <position position="77"/>
    </location>
</feature>
<feature type="sequence conflict" description="In Ref. 1; CAA28836." evidence="4" ref="1">
    <original>R</original>
    <variation>T</variation>
    <location>
        <position position="226"/>
    </location>
</feature>
<feature type="sequence conflict" description="In Ref. 1; CAA28836." evidence="4" ref="1">
    <original>I</original>
    <variation>T</variation>
    <location>
        <position position="235"/>
    </location>
</feature>
<feature type="sequence conflict" description="In Ref. 1; CAA28836." evidence="4" ref="1">
    <original>Q</original>
    <variation>H</variation>
    <location>
        <position position="403"/>
    </location>
</feature>
<feature type="sequence conflict" description="In Ref. 1; CAA28836." evidence="4" ref="1">
    <original>A</original>
    <variation>P</variation>
    <location>
        <position position="535"/>
    </location>
</feature>
<feature type="sequence conflict" description="In Ref. 1; CAA28836." evidence="4" ref="1">
    <original>S</original>
    <variation>C</variation>
    <location>
        <position position="646"/>
    </location>
</feature>
<feature type="sequence conflict" description="In Ref. 1; CAA28836 and 4; no nucleotide entry." evidence="4" ref="1 4">
    <original>A</original>
    <variation>G</variation>
    <location>
        <position position="862"/>
    </location>
</feature>
<feature type="sequence conflict" description="In Ref. 1; CAA28836 and 4; no nucleotide entry." evidence="4" ref="1 4">
    <original>T</original>
    <variation>S</variation>
    <location>
        <position position="984"/>
    </location>
</feature>
<feature type="sequence conflict" description="In Ref. 4; no nucleotide entry." evidence="4" ref="4">
    <original>K</original>
    <variation>G</variation>
    <location>
        <position position="1048"/>
    </location>
</feature>
<feature type="sequence conflict" description="In Ref. 4; no nucleotide entry." evidence="4" ref="4">
    <original>D</original>
    <variation>N</variation>
    <location>
        <position position="1093"/>
    </location>
</feature>
<feature type="sequence conflict" description="In Ref. 1; CAA28836 and 4; no nucleotide entry." evidence="4" ref="1 4">
    <original>E</original>
    <variation>D</variation>
    <location>
        <position position="1154"/>
    </location>
</feature>
<feature type="sequence conflict" description="In Ref. 1; CAA28836." evidence="4" ref="1">
    <original>SVTIP</original>
    <variation>FRNNS</variation>
    <location>
        <begin position="1345"/>
        <end position="1349"/>
    </location>
</feature>
<feature type="strand" evidence="7">
    <location>
        <begin position="5"/>
        <end position="9"/>
    </location>
</feature>
<feature type="strand" evidence="7">
    <location>
        <begin position="12"/>
        <end position="18"/>
    </location>
</feature>
<feature type="helix" evidence="7">
    <location>
        <begin position="21"/>
        <end position="24"/>
    </location>
</feature>
<feature type="helix" evidence="7">
    <location>
        <begin position="26"/>
        <end position="33"/>
    </location>
</feature>
<feature type="strand" evidence="7">
    <location>
        <begin position="37"/>
        <end position="44"/>
    </location>
</feature>
<feature type="helix" evidence="7">
    <location>
        <begin position="45"/>
        <end position="65"/>
    </location>
</feature>
<feature type="strand" evidence="7">
    <location>
        <begin position="66"/>
        <end position="68"/>
    </location>
</feature>
<feature type="strand" evidence="7">
    <location>
        <begin position="71"/>
        <end position="77"/>
    </location>
</feature>
<feature type="helix" evidence="7">
    <location>
        <begin position="81"/>
        <end position="83"/>
    </location>
</feature>
<feature type="helix" evidence="7">
    <location>
        <begin position="86"/>
        <end position="97"/>
    </location>
</feature>
<feature type="strand" evidence="7">
    <location>
        <begin position="99"/>
        <end position="101"/>
    </location>
</feature>
<feature type="strand" evidence="7">
    <location>
        <begin position="108"/>
        <end position="114"/>
    </location>
</feature>
<feature type="helix" evidence="7">
    <location>
        <begin position="115"/>
        <end position="127"/>
    </location>
</feature>
<feature type="helix" evidence="7">
    <location>
        <begin position="128"/>
        <end position="130"/>
    </location>
</feature>
<feature type="strand" evidence="7">
    <location>
        <begin position="133"/>
        <end position="138"/>
    </location>
</feature>
<feature type="helix" evidence="7">
    <location>
        <begin position="141"/>
        <end position="145"/>
    </location>
</feature>
<feature type="turn" evidence="7">
    <location>
        <begin position="146"/>
        <end position="148"/>
    </location>
</feature>
<feature type="strand" evidence="7">
    <location>
        <begin position="152"/>
        <end position="157"/>
    </location>
</feature>
<feature type="strand" evidence="7">
    <location>
        <begin position="160"/>
        <end position="167"/>
    </location>
</feature>
<feature type="strand" evidence="7">
    <location>
        <begin position="171"/>
        <end position="176"/>
    </location>
</feature>
<feature type="helix" evidence="7">
    <location>
        <begin position="177"/>
        <end position="181"/>
    </location>
</feature>
<feature type="helix" evidence="7">
    <location>
        <begin position="185"/>
        <end position="200"/>
    </location>
</feature>
<feature type="helix" evidence="7">
    <location>
        <begin position="204"/>
        <end position="222"/>
    </location>
</feature>
<feature type="strand" evidence="5">
    <location>
        <begin position="227"/>
        <end position="229"/>
    </location>
</feature>
<feature type="helix" evidence="7">
    <location>
        <begin position="233"/>
        <end position="235"/>
    </location>
</feature>
<feature type="helix" evidence="7">
    <location>
        <begin position="236"/>
        <end position="255"/>
    </location>
</feature>
<feature type="turn" evidence="6">
    <location>
        <begin position="257"/>
        <end position="259"/>
    </location>
</feature>
<feature type="helix" evidence="7">
    <location>
        <begin position="263"/>
        <end position="268"/>
    </location>
</feature>
<feature type="helix" evidence="7">
    <location>
        <begin position="271"/>
        <end position="281"/>
    </location>
</feature>
<feature type="turn" evidence="7">
    <location>
        <begin position="282"/>
        <end position="284"/>
    </location>
</feature>
<feature type="helix" evidence="7">
    <location>
        <begin position="287"/>
        <end position="304"/>
    </location>
</feature>
<feature type="helix" evidence="7">
    <location>
        <begin position="310"/>
        <end position="322"/>
    </location>
</feature>
<feature type="helix" evidence="7">
    <location>
        <begin position="332"/>
        <end position="337"/>
    </location>
</feature>
<feature type="turn" evidence="7">
    <location>
        <begin position="338"/>
        <end position="340"/>
    </location>
</feature>
<feature type="helix" evidence="7">
    <location>
        <begin position="345"/>
        <end position="353"/>
    </location>
</feature>
<feature type="strand" evidence="5">
    <location>
        <begin position="362"/>
        <end position="365"/>
    </location>
</feature>
<feature type="strand" evidence="7">
    <location>
        <begin position="368"/>
        <end position="370"/>
    </location>
</feature>
<feature type="strand" evidence="7">
    <location>
        <begin position="373"/>
        <end position="378"/>
    </location>
</feature>
<feature type="strand" evidence="5">
    <location>
        <begin position="380"/>
        <end position="383"/>
    </location>
</feature>
<feature type="helix" evidence="7">
    <location>
        <begin position="384"/>
        <end position="390"/>
    </location>
</feature>
<reference key="1">
    <citation type="journal article" date="1986" name="Nucleic Acids Res.">
        <title>The isolation and nucleotide sequence of the complex AROM locus of Aspergillus nidulans.</title>
        <authorList>
            <person name="Charles I.G."/>
            <person name="Keyte J.W."/>
            <person name="Brammar W.J."/>
            <person name="Smith M."/>
            <person name="Hawkins A.R."/>
        </authorList>
    </citation>
    <scope>NUCLEOTIDE SEQUENCE [GENOMIC DNA]</scope>
    <source>
        <strain>R153</strain>
    </source>
</reference>
<reference key="2">
    <citation type="journal article" date="2005" name="Nature">
        <title>Sequencing of Aspergillus nidulans and comparative analysis with A. fumigatus and A. oryzae.</title>
        <authorList>
            <person name="Galagan J.E."/>
            <person name="Calvo S.E."/>
            <person name="Cuomo C."/>
            <person name="Ma L.-J."/>
            <person name="Wortman J.R."/>
            <person name="Batzoglou S."/>
            <person name="Lee S.-I."/>
            <person name="Bastuerkmen M."/>
            <person name="Spevak C.C."/>
            <person name="Clutterbuck J."/>
            <person name="Kapitonov V."/>
            <person name="Jurka J."/>
            <person name="Scazzocchio C."/>
            <person name="Farman M.L."/>
            <person name="Butler J."/>
            <person name="Purcell S."/>
            <person name="Harris S."/>
            <person name="Braus G.H."/>
            <person name="Draht O."/>
            <person name="Busch S."/>
            <person name="D'Enfert C."/>
            <person name="Bouchier C."/>
            <person name="Goldman G.H."/>
            <person name="Bell-Pedersen D."/>
            <person name="Griffiths-Jones S."/>
            <person name="Doonan J.H."/>
            <person name="Yu J."/>
            <person name="Vienken K."/>
            <person name="Pain A."/>
            <person name="Freitag M."/>
            <person name="Selker E.U."/>
            <person name="Archer D.B."/>
            <person name="Penalva M.A."/>
            <person name="Oakley B.R."/>
            <person name="Momany M."/>
            <person name="Tanaka T."/>
            <person name="Kumagai T."/>
            <person name="Asai K."/>
            <person name="Machida M."/>
            <person name="Nierman W.C."/>
            <person name="Denning D.W."/>
            <person name="Caddick M.X."/>
            <person name="Hynes M."/>
            <person name="Paoletti M."/>
            <person name="Fischer R."/>
            <person name="Miller B.L."/>
            <person name="Dyer P.S."/>
            <person name="Sachs M.S."/>
            <person name="Osmani S.A."/>
            <person name="Birren B.W."/>
        </authorList>
    </citation>
    <scope>NUCLEOTIDE SEQUENCE [LARGE SCALE GENOMIC DNA]</scope>
    <source>
        <strain>FGSC A4 / ATCC 38163 / CBS 112.46 / NRRL 194 / M139</strain>
    </source>
</reference>
<reference key="3">
    <citation type="journal article" date="2009" name="Fungal Genet. Biol.">
        <title>The 2008 update of the Aspergillus nidulans genome annotation: a community effort.</title>
        <authorList>
            <person name="Wortman J.R."/>
            <person name="Gilsenan J.M."/>
            <person name="Joardar V."/>
            <person name="Deegan J."/>
            <person name="Clutterbuck J."/>
            <person name="Andersen M.R."/>
            <person name="Archer D."/>
            <person name="Bencina M."/>
            <person name="Braus G."/>
            <person name="Coutinho P."/>
            <person name="von Dohren H."/>
            <person name="Doonan J."/>
            <person name="Driessen A.J."/>
            <person name="Durek P."/>
            <person name="Espeso E."/>
            <person name="Fekete E."/>
            <person name="Flipphi M."/>
            <person name="Estrada C.G."/>
            <person name="Geysens S."/>
            <person name="Goldman G."/>
            <person name="de Groot P.W."/>
            <person name="Hansen K."/>
            <person name="Harris S.D."/>
            <person name="Heinekamp T."/>
            <person name="Helmstaedt K."/>
            <person name="Henrissat B."/>
            <person name="Hofmann G."/>
            <person name="Homan T."/>
            <person name="Horio T."/>
            <person name="Horiuchi H."/>
            <person name="James S."/>
            <person name="Jones M."/>
            <person name="Karaffa L."/>
            <person name="Karanyi Z."/>
            <person name="Kato M."/>
            <person name="Keller N."/>
            <person name="Kelly D.E."/>
            <person name="Kiel J.A."/>
            <person name="Kim J.M."/>
            <person name="van der Klei I.J."/>
            <person name="Klis F.M."/>
            <person name="Kovalchuk A."/>
            <person name="Krasevec N."/>
            <person name="Kubicek C.P."/>
            <person name="Liu B."/>
            <person name="Maccabe A."/>
            <person name="Meyer V."/>
            <person name="Mirabito P."/>
            <person name="Miskei M."/>
            <person name="Mos M."/>
            <person name="Mullins J."/>
            <person name="Nelson D.R."/>
            <person name="Nielsen J."/>
            <person name="Oakley B.R."/>
            <person name="Osmani S.A."/>
            <person name="Pakula T."/>
            <person name="Paszewski A."/>
            <person name="Paulsen I."/>
            <person name="Pilsyk S."/>
            <person name="Pocsi I."/>
            <person name="Punt P.J."/>
            <person name="Ram A.F."/>
            <person name="Ren Q."/>
            <person name="Robellet X."/>
            <person name="Robson G."/>
            <person name="Seiboth B."/>
            <person name="van Solingen P."/>
            <person name="Specht T."/>
            <person name="Sun J."/>
            <person name="Taheri-Talesh N."/>
            <person name="Takeshita N."/>
            <person name="Ussery D."/>
            <person name="vanKuyk P.A."/>
            <person name="Visser H."/>
            <person name="van de Vondervoort P.J."/>
            <person name="de Vries R.P."/>
            <person name="Walton J."/>
            <person name="Xiang X."/>
            <person name="Xiong Y."/>
            <person name="Zeng A.P."/>
            <person name="Brandt B.W."/>
            <person name="Cornell M.J."/>
            <person name="van den Hondel C.A."/>
            <person name="Visser J."/>
            <person name="Oliver S.G."/>
            <person name="Turner G."/>
        </authorList>
    </citation>
    <scope>GENOME REANNOTATION</scope>
    <source>
        <strain>FGSC A4 / ATCC 38163 / CBS 112.46 / NRRL 194 / M139</strain>
    </source>
</reference>
<reference key="4">
    <citation type="journal article" date="1985" name="Nucleic Acids Res.">
        <title>Nucleotide sequence encoding the biosynthetic dehydroquinase function of the penta-functional arom locus of Aspergillus nidulans.</title>
        <authorList>
            <person name="Charles I.G."/>
            <person name="Keyte J.W."/>
            <person name="Brammar W.J."/>
            <person name="Hawkins A.R."/>
        </authorList>
    </citation>
    <scope>NUCLEOTIDE SEQUENCE [GENOMIC DNA] OF 843-1473</scope>
    <source>
        <strain>R153</strain>
    </source>
</reference>
<reference key="5">
    <citation type="submission" date="1998-10" db="EMBL/GenBank/DDBJ databases">
        <authorList>
            <person name="Hawkins A.R."/>
        </authorList>
    </citation>
    <scope>SEQUENCE REVISION TO C-TERMINUS</scope>
</reference>
<reference key="6">
    <citation type="journal article" date="1996" name="Biochem. J.">
        <title>Comparative analysis of the QUTR transcription repressor protein and the three C-terminal domains of the pentafunctional AROM enzyme.</title>
        <authorList>
            <person name="Lamb H.K."/>
            <person name="Moore J.D."/>
            <person name="Lakey J.H."/>
            <person name="Levett L.J."/>
            <person name="Wheeler K.A."/>
            <person name="Lago H."/>
            <person name="Coggins J.R."/>
            <person name="Hawkins A.R."/>
        </authorList>
    </citation>
    <scope>IDENTIFICATION OF INTRON</scope>
</reference>
<reference key="7">
    <citation type="journal article" date="1998" name="Nature">
        <title>Structure of dehydroquinate synthase reveals an active site capable of multistep catalysis.</title>
        <authorList>
            <person name="Carpenter E.P."/>
            <person name="Hawkins A.R."/>
            <person name="Frost J.W."/>
            <person name="Brown K.A."/>
        </authorList>
    </citation>
    <scope>X-RAY CRYSTALLOGRAPHY (1.8 ANGSTROMS) OF 1-393 IN COMPLEX WITH NAD; ZINC AND SUBSTRATE ANALOG</scope>
    <scope>SUBUNIT</scope>
</reference>
<reference key="8">
    <citation type="journal article" date="2003" name="J. Mol. Biol.">
        <title>Ligand-induced conformational changes and a mechanism for domain closure in Aspergillus nidulans dehydroquinate synthase.</title>
        <authorList>
            <person name="Nichols C.E."/>
            <person name="Ren J."/>
            <person name="Lamb H.K."/>
            <person name="Hawkins A.R."/>
            <person name="Stammers D.K."/>
        </authorList>
    </citation>
    <scope>X-RAY CRYSTALLOGRAPHY (2.1 ANGSTROMS) OF 1-393 IN COMPLEX WITH ADP; NAD; ZINC AND SUBSTRATE ANALOG</scope>
</reference>
<reference key="9">
    <citation type="journal article" date="2004" name="Acta Crystallogr. D">
        <title>Structure of the 'open' form of Aspergillus nidulans 3-dehydroquinate synthase at 1.7 A resolution from crystals grown following enzyme turnover.</title>
        <authorList>
            <person name="Nichols C.E."/>
            <person name="Hawkins A.R."/>
            <person name="Stammers D.K."/>
        </authorList>
    </citation>
    <scope>X-RAY CRYSTALLOGRAPHY (1.7 ANGSTROMS) OF 1-393</scope>
</reference>
<organism>
    <name type="scientific">Emericella nidulans (strain FGSC A4 / ATCC 38163 / CBS 112.46 / NRRL 194 / M139)</name>
    <name type="common">Aspergillus nidulans</name>
    <dbReference type="NCBI Taxonomy" id="227321"/>
    <lineage>
        <taxon>Eukaryota</taxon>
        <taxon>Fungi</taxon>
        <taxon>Dikarya</taxon>
        <taxon>Ascomycota</taxon>
        <taxon>Pezizomycotina</taxon>
        <taxon>Eurotiomycetes</taxon>
        <taxon>Eurotiomycetidae</taxon>
        <taxon>Eurotiales</taxon>
        <taxon>Aspergillaceae</taxon>
        <taxon>Aspergillus</taxon>
        <taxon>Aspergillus subgen. Nidulantes</taxon>
    </lineage>
</organism>
<dbReference type="EC" id="4.2.3.4" evidence="1"/>
<dbReference type="EC" id="2.5.1.19" evidence="1"/>
<dbReference type="EC" id="2.7.1.71" evidence="1"/>
<dbReference type="EC" id="4.2.1.10" evidence="1"/>
<dbReference type="EC" id="1.1.1.25" evidence="1"/>
<dbReference type="EMBL" id="X05204">
    <property type="protein sequence ID" value="CAA28836.1"/>
    <property type="status" value="ALT_SEQ"/>
    <property type="molecule type" value="Genomic_DNA"/>
</dbReference>
<dbReference type="EMBL" id="AACD01000010">
    <property type="protein sequence ID" value="EAA65484.1"/>
    <property type="status" value="ALT_SEQ"/>
    <property type="molecule type" value="Genomic_DNA"/>
</dbReference>
<dbReference type="EMBL" id="AACD01000011">
    <property type="status" value="NOT_ANNOTATED_CDS"/>
    <property type="molecule type" value="Genomic_DNA"/>
</dbReference>
<dbReference type="EMBL" id="BN001308">
    <property type="protein sequence ID" value="CBF88944.1"/>
    <property type="molecule type" value="Genomic_DNA"/>
</dbReference>
<dbReference type="PIR" id="A24962">
    <property type="entry name" value="BVASA1"/>
</dbReference>
<dbReference type="RefSeq" id="XP_658312.1">
    <property type="nucleotide sequence ID" value="XM_653220.1"/>
</dbReference>
<dbReference type="PDB" id="1DQS">
    <property type="method" value="X-ray"/>
    <property type="resolution" value="1.80 A"/>
    <property type="chains" value="A/B=1-393"/>
</dbReference>
<dbReference type="PDB" id="1NR5">
    <property type="method" value="X-ray"/>
    <property type="resolution" value="2.10 A"/>
    <property type="chains" value="A/B=1-393"/>
</dbReference>
<dbReference type="PDB" id="1NRX">
    <property type="method" value="X-ray"/>
    <property type="resolution" value="2.90 A"/>
    <property type="chains" value="A/B=1-393"/>
</dbReference>
<dbReference type="PDB" id="1NUA">
    <property type="method" value="X-ray"/>
    <property type="resolution" value="2.85 A"/>
    <property type="chains" value="A/B=1-393"/>
</dbReference>
<dbReference type="PDB" id="1NVA">
    <property type="method" value="X-ray"/>
    <property type="resolution" value="2.62 A"/>
    <property type="chains" value="A/B=1-393"/>
</dbReference>
<dbReference type="PDB" id="1NVB">
    <property type="method" value="X-ray"/>
    <property type="resolution" value="2.70 A"/>
    <property type="chains" value="A/B=1-393"/>
</dbReference>
<dbReference type="PDB" id="1NVD">
    <property type="method" value="X-ray"/>
    <property type="resolution" value="2.51 A"/>
    <property type="chains" value="A/B=1-393"/>
</dbReference>
<dbReference type="PDB" id="1NVE">
    <property type="method" value="X-ray"/>
    <property type="resolution" value="2.58 A"/>
    <property type="chains" value="A/B/C/D=1-393"/>
</dbReference>
<dbReference type="PDB" id="1NVF">
    <property type="method" value="X-ray"/>
    <property type="resolution" value="2.80 A"/>
    <property type="chains" value="A/B/C=1-393"/>
</dbReference>
<dbReference type="PDB" id="1SG6">
    <property type="method" value="X-ray"/>
    <property type="resolution" value="1.70 A"/>
    <property type="chains" value="A/B=1-393"/>
</dbReference>
<dbReference type="PDBsum" id="1DQS"/>
<dbReference type="PDBsum" id="1NR5"/>
<dbReference type="PDBsum" id="1NRX"/>
<dbReference type="PDBsum" id="1NUA"/>
<dbReference type="PDBsum" id="1NVA"/>
<dbReference type="PDBsum" id="1NVB"/>
<dbReference type="PDBsum" id="1NVD"/>
<dbReference type="PDBsum" id="1NVE"/>
<dbReference type="PDBsum" id="1NVF"/>
<dbReference type="PDBsum" id="1SG6"/>
<dbReference type="SMR" id="P07547"/>
<dbReference type="FunCoup" id="P07547">
    <property type="interactions" value="460"/>
</dbReference>
<dbReference type="STRING" id="227321.P07547"/>
<dbReference type="eggNOG" id="KOG0692">
    <property type="taxonomic scope" value="Eukaryota"/>
</dbReference>
<dbReference type="HOGENOM" id="CLU_001201_0_2_1"/>
<dbReference type="InParanoid" id="P07547"/>
<dbReference type="BRENDA" id="1.1.1.25">
    <property type="organism ID" value="517"/>
</dbReference>
<dbReference type="BRENDA" id="4.2.3.4">
    <property type="organism ID" value="517"/>
</dbReference>
<dbReference type="SABIO-RK" id="P07547"/>
<dbReference type="UniPathway" id="UPA00053">
    <property type="reaction ID" value="UER00085"/>
</dbReference>
<dbReference type="UniPathway" id="UPA00053">
    <property type="reaction ID" value="UER00086"/>
</dbReference>
<dbReference type="UniPathway" id="UPA00053">
    <property type="reaction ID" value="UER00087"/>
</dbReference>
<dbReference type="UniPathway" id="UPA00053">
    <property type="reaction ID" value="UER00088"/>
</dbReference>
<dbReference type="UniPathway" id="UPA00053">
    <property type="reaction ID" value="UER00089"/>
</dbReference>
<dbReference type="EvolutionaryTrace" id="P07547"/>
<dbReference type="Proteomes" id="UP000000560">
    <property type="component" value="Chromosome VIII"/>
</dbReference>
<dbReference type="GO" id="GO:0005737">
    <property type="term" value="C:cytoplasm"/>
    <property type="evidence" value="ECO:0007669"/>
    <property type="project" value="UniProtKB-SubCell"/>
</dbReference>
<dbReference type="GO" id="GO:0003855">
    <property type="term" value="F:3-dehydroquinate dehydratase activity"/>
    <property type="evidence" value="ECO:0007669"/>
    <property type="project" value="UniProtKB-UniRule"/>
</dbReference>
<dbReference type="GO" id="GO:0003856">
    <property type="term" value="F:3-dehydroquinate synthase activity"/>
    <property type="evidence" value="ECO:0007669"/>
    <property type="project" value="UniProtKB-UniRule"/>
</dbReference>
<dbReference type="GO" id="GO:0003866">
    <property type="term" value="F:3-phosphoshikimate 1-carboxyvinyltransferase activity"/>
    <property type="evidence" value="ECO:0000318"/>
    <property type="project" value="GO_Central"/>
</dbReference>
<dbReference type="GO" id="GO:0005524">
    <property type="term" value="F:ATP binding"/>
    <property type="evidence" value="ECO:0007669"/>
    <property type="project" value="UniProtKB-UniRule"/>
</dbReference>
<dbReference type="GO" id="GO:0046872">
    <property type="term" value="F:metal ion binding"/>
    <property type="evidence" value="ECO:0007669"/>
    <property type="project" value="UniProtKB-UniRule"/>
</dbReference>
<dbReference type="GO" id="GO:0004764">
    <property type="term" value="F:shikimate 3-dehydrogenase (NADP+) activity"/>
    <property type="evidence" value="ECO:0007669"/>
    <property type="project" value="UniProtKB-UniRule"/>
</dbReference>
<dbReference type="GO" id="GO:0004765">
    <property type="term" value="F:shikimate kinase activity"/>
    <property type="evidence" value="ECO:0007669"/>
    <property type="project" value="UniProtKB-UniRule"/>
</dbReference>
<dbReference type="GO" id="GO:0008652">
    <property type="term" value="P:amino acid biosynthetic process"/>
    <property type="evidence" value="ECO:0007669"/>
    <property type="project" value="UniProtKB-KW"/>
</dbReference>
<dbReference type="GO" id="GO:0009073">
    <property type="term" value="P:aromatic amino acid family biosynthetic process"/>
    <property type="evidence" value="ECO:0007669"/>
    <property type="project" value="UniProtKB-UniRule"/>
</dbReference>
<dbReference type="GO" id="GO:0009423">
    <property type="term" value="P:chorismate biosynthetic process"/>
    <property type="evidence" value="ECO:0000318"/>
    <property type="project" value="GO_Central"/>
</dbReference>
<dbReference type="CDD" id="cd00502">
    <property type="entry name" value="DHQase_I"/>
    <property type="match status" value="1"/>
</dbReference>
<dbReference type="CDD" id="cd08195">
    <property type="entry name" value="DHQS"/>
    <property type="match status" value="1"/>
</dbReference>
<dbReference type="CDD" id="cd01556">
    <property type="entry name" value="EPSP_synthase"/>
    <property type="match status" value="1"/>
</dbReference>
<dbReference type="CDD" id="cd01065">
    <property type="entry name" value="NAD_bind_Shikimate_DH"/>
    <property type="match status" value="1"/>
</dbReference>
<dbReference type="CDD" id="cd00464">
    <property type="entry name" value="SK"/>
    <property type="match status" value="1"/>
</dbReference>
<dbReference type="FunFam" id="1.20.1090.10:FF:000007">
    <property type="entry name" value="Pentafunctional AROM polypeptide"/>
    <property type="match status" value="1"/>
</dbReference>
<dbReference type="FunFam" id="3.20.20.70:FF:000135">
    <property type="entry name" value="Pentafunctional AROM polypeptide"/>
    <property type="match status" value="1"/>
</dbReference>
<dbReference type="FunFam" id="3.40.50.10860:FF:000015">
    <property type="entry name" value="Pentafunctional AROM polypeptide"/>
    <property type="match status" value="1"/>
</dbReference>
<dbReference type="FunFam" id="3.40.50.1970:FF:000007">
    <property type="entry name" value="Pentafunctional AROM polypeptide"/>
    <property type="match status" value="1"/>
</dbReference>
<dbReference type="FunFam" id="3.40.50.300:FF:001256">
    <property type="entry name" value="Pentafunctional AROM polypeptide"/>
    <property type="match status" value="1"/>
</dbReference>
<dbReference type="FunFam" id="3.40.50.720:FF:000483">
    <property type="entry name" value="Pentafunctional AROM polypeptide"/>
    <property type="match status" value="1"/>
</dbReference>
<dbReference type="FunFam" id="3.65.10.10:FF:000007">
    <property type="entry name" value="Pentafunctional AROM polypeptide"/>
    <property type="match status" value="1"/>
</dbReference>
<dbReference type="FunFam" id="3.65.10.10:FF:000008">
    <property type="entry name" value="Pentafunctional AROM polypeptide"/>
    <property type="match status" value="1"/>
</dbReference>
<dbReference type="Gene3D" id="3.40.50.1970">
    <property type="match status" value="1"/>
</dbReference>
<dbReference type="Gene3D" id="3.20.20.70">
    <property type="entry name" value="Aldolase class I"/>
    <property type="match status" value="1"/>
</dbReference>
<dbReference type="Gene3D" id="1.20.1090.10">
    <property type="entry name" value="Dehydroquinate synthase-like - alpha domain"/>
    <property type="match status" value="1"/>
</dbReference>
<dbReference type="Gene3D" id="3.65.10.10">
    <property type="entry name" value="Enolpyruvate transferase domain"/>
    <property type="match status" value="2"/>
</dbReference>
<dbReference type="Gene3D" id="3.40.50.10860">
    <property type="entry name" value="Leucine Dehydrogenase, chain A, domain 1"/>
    <property type="match status" value="1"/>
</dbReference>
<dbReference type="Gene3D" id="3.40.50.720">
    <property type="entry name" value="NAD(P)-binding Rossmann-like Domain"/>
    <property type="match status" value="1"/>
</dbReference>
<dbReference type="Gene3D" id="3.40.50.300">
    <property type="entry name" value="P-loop containing nucleotide triphosphate hydrolases"/>
    <property type="match status" value="1"/>
</dbReference>
<dbReference type="HAMAP" id="MF_00210">
    <property type="entry name" value="EPSP_synth"/>
    <property type="match status" value="1"/>
</dbReference>
<dbReference type="HAMAP" id="MF_03143">
    <property type="entry name" value="Pentafunct_AroM"/>
    <property type="match status" value="1"/>
</dbReference>
<dbReference type="HAMAP" id="MF_00109">
    <property type="entry name" value="Shikimate_kinase"/>
    <property type="match status" value="1"/>
</dbReference>
<dbReference type="InterPro" id="IPR018508">
    <property type="entry name" value="3-dehydroquinate_DH_AS"/>
</dbReference>
<dbReference type="InterPro" id="IPR013785">
    <property type="entry name" value="Aldolase_TIM"/>
</dbReference>
<dbReference type="InterPro" id="IPR046346">
    <property type="entry name" value="Aminoacid_DH-like_N_sf"/>
</dbReference>
<dbReference type="InterPro" id="IPR016037">
    <property type="entry name" value="DHQ_synth_AroB"/>
</dbReference>
<dbReference type="InterPro" id="IPR030960">
    <property type="entry name" value="DHQS/DOIS_N"/>
</dbReference>
<dbReference type="InterPro" id="IPR056179">
    <property type="entry name" value="DHQS_C"/>
</dbReference>
<dbReference type="InterPro" id="IPR001381">
    <property type="entry name" value="DHquinase_I"/>
</dbReference>
<dbReference type="InterPro" id="IPR001986">
    <property type="entry name" value="Enolpyruvate_Tfrase_dom"/>
</dbReference>
<dbReference type="InterPro" id="IPR036968">
    <property type="entry name" value="Enolpyruvate_Tfrase_sf"/>
</dbReference>
<dbReference type="InterPro" id="IPR006264">
    <property type="entry name" value="EPSP_synthase"/>
</dbReference>
<dbReference type="InterPro" id="IPR023193">
    <property type="entry name" value="EPSP_synthase_CS"/>
</dbReference>
<dbReference type="InterPro" id="IPR036291">
    <property type="entry name" value="NAD(P)-bd_dom_sf"/>
</dbReference>
<dbReference type="InterPro" id="IPR027417">
    <property type="entry name" value="P-loop_NTPase"/>
</dbReference>
<dbReference type="InterPro" id="IPR008289">
    <property type="entry name" value="Pentafunct_AroM"/>
</dbReference>
<dbReference type="InterPro" id="IPR013792">
    <property type="entry name" value="RNA3'P_cycl/enolpyr_Trfase_a/b"/>
</dbReference>
<dbReference type="InterPro" id="IPR041121">
    <property type="entry name" value="SDH_C"/>
</dbReference>
<dbReference type="InterPro" id="IPR031322">
    <property type="entry name" value="Shikimate/glucono_kinase"/>
</dbReference>
<dbReference type="InterPro" id="IPR013708">
    <property type="entry name" value="Shikimate_DH-bd_N"/>
</dbReference>
<dbReference type="InterPro" id="IPR010110">
    <property type="entry name" value="Shikimate_DH_AroM-type"/>
</dbReference>
<dbReference type="InterPro" id="IPR000623">
    <property type="entry name" value="Shikimate_kinase/TSH1"/>
</dbReference>
<dbReference type="InterPro" id="IPR023000">
    <property type="entry name" value="Shikimate_kinase_CS"/>
</dbReference>
<dbReference type="NCBIfam" id="TIGR01356">
    <property type="entry name" value="aroA"/>
    <property type="match status" value="1"/>
</dbReference>
<dbReference type="NCBIfam" id="TIGR01357">
    <property type="entry name" value="aroB"/>
    <property type="match status" value="1"/>
</dbReference>
<dbReference type="NCBIfam" id="TIGR01093">
    <property type="entry name" value="aroD"/>
    <property type="match status" value="1"/>
</dbReference>
<dbReference type="NCBIfam" id="TIGR01809">
    <property type="entry name" value="Shik-DH-AROM"/>
    <property type="match status" value="1"/>
</dbReference>
<dbReference type="PANTHER" id="PTHR21090">
    <property type="entry name" value="AROM/DEHYDROQUINATE SYNTHASE"/>
    <property type="match status" value="1"/>
</dbReference>
<dbReference type="PANTHER" id="PTHR21090:SF5">
    <property type="entry name" value="PENTAFUNCTIONAL AROM POLYPEPTIDE"/>
    <property type="match status" value="1"/>
</dbReference>
<dbReference type="Pfam" id="PF01761">
    <property type="entry name" value="DHQ_synthase"/>
    <property type="match status" value="1"/>
</dbReference>
<dbReference type="Pfam" id="PF24621">
    <property type="entry name" value="DHQS_C"/>
    <property type="match status" value="1"/>
</dbReference>
<dbReference type="Pfam" id="PF01487">
    <property type="entry name" value="DHquinase_I"/>
    <property type="match status" value="1"/>
</dbReference>
<dbReference type="Pfam" id="PF00275">
    <property type="entry name" value="EPSP_synthase"/>
    <property type="match status" value="1"/>
</dbReference>
<dbReference type="Pfam" id="PF18317">
    <property type="entry name" value="SDH_C"/>
    <property type="match status" value="1"/>
</dbReference>
<dbReference type="Pfam" id="PF08501">
    <property type="entry name" value="Shikimate_dh_N"/>
    <property type="match status" value="1"/>
</dbReference>
<dbReference type="Pfam" id="PF01202">
    <property type="entry name" value="SKI"/>
    <property type="match status" value="1"/>
</dbReference>
<dbReference type="PIRSF" id="PIRSF000514">
    <property type="entry name" value="Pentafunct_AroM"/>
    <property type="match status" value="1"/>
</dbReference>
<dbReference type="PRINTS" id="PR01100">
    <property type="entry name" value="SHIKIMTKNASE"/>
</dbReference>
<dbReference type="SUPFAM" id="SSF51569">
    <property type="entry name" value="Aldolase"/>
    <property type="match status" value="1"/>
</dbReference>
<dbReference type="SUPFAM" id="SSF53223">
    <property type="entry name" value="Aminoacid dehydrogenase-like, N-terminal domain"/>
    <property type="match status" value="1"/>
</dbReference>
<dbReference type="SUPFAM" id="SSF56796">
    <property type="entry name" value="Dehydroquinate synthase-like"/>
    <property type="match status" value="1"/>
</dbReference>
<dbReference type="SUPFAM" id="SSF55205">
    <property type="entry name" value="EPT/RTPC-like"/>
    <property type="match status" value="1"/>
</dbReference>
<dbReference type="SUPFAM" id="SSF51735">
    <property type="entry name" value="NAD(P)-binding Rossmann-fold domains"/>
    <property type="match status" value="1"/>
</dbReference>
<dbReference type="SUPFAM" id="SSF52540">
    <property type="entry name" value="P-loop containing nucleoside triphosphate hydrolases"/>
    <property type="match status" value="1"/>
</dbReference>
<dbReference type="PROSITE" id="PS01028">
    <property type="entry name" value="DEHYDROQUINASE_I"/>
    <property type="match status" value="1"/>
</dbReference>
<dbReference type="PROSITE" id="PS00104">
    <property type="entry name" value="EPSP_SYNTHASE_1"/>
    <property type="match status" value="1"/>
</dbReference>
<dbReference type="PROSITE" id="PS00885">
    <property type="entry name" value="EPSP_SYNTHASE_2"/>
    <property type="match status" value="1"/>
</dbReference>
<dbReference type="PROSITE" id="PS01128">
    <property type="entry name" value="SHIKIMATE_KINASE"/>
    <property type="match status" value="1"/>
</dbReference>